<comment type="function">
    <text evidence="2 7 9 10 12 13 16 17 19">Involved in several stages of intracellular trafficking. Interacts with membranes phosphatidylinositol 3,4-bisphosphate and/or phosphatidylinositol 4,5-bisphosphate (Probable). Acts in part as component of the retromer membrane-deforming SNX-BAR subcomplex (PubMed:19935774). The SNX-BAR retromer mediates retrograde transport of cargo proteins from endosomes to the trans-Golgi network (TGN) and is involved in endosome-to-plasma membrane transport for cargo protein recycling. The SNX-BAR subcomplex functions to deform the donor membrane into a tubular profile called endosome-to-TGN transport carrier (ETC) (Probable). Does not have in vitro vesicle-to-membrane remodeling activity (PubMed:23085988). Involved in retrograde endosome-to-TGN transport of lysosomal enzyme receptor IGF2R (PubMed:17148574). May function as link between transport vesicles and dynactin (Probable). Negatively regulates retrograde transport of BACE1 from the cell surface to the trans-Golgi network (PubMed:20354142). Involved in E-cadherin sorting and degradation; inhibits PIP5K1C isoform 3-mediated E-cadherin degradation (PubMed:24610942). In association with GIT1 involved in EGFR degradation. Promotes lysosomal degradation of CDKN1B (By similarity). May contribute to transcription regulation (Probable).</text>
</comment>
<comment type="subunit">
    <text evidence="2 4 6 7 8 9 10 11 12 13">Forms heterodimers with BAR domain-containing sorting nexins SNX1 and SNX2 (PubMed:23085988). The heterodimers are proposed to self-assemble into helical arrays on the membrane to stabilize and expand local membrane curvature underlying endosomal tubule formation. Thought to be a component of the originally described retromer complex (also called SNX-BAR retromer) which is a pentamer containing the heterotrimeric retromer cargo-selective complex (CSC), also described as vacuolar protein sorting subcomplex (VPS), and a heterodimeric membrane-deforming subcomplex formed between SNX1 or SNX2 and SNX5 or SNX6 (also called SNX-BAR subcomplex); the respective CSC and SNX-BAR subcomplexes associate with low affinity (Probable). Interacts with SNX1, SNX2, VPS26A, VPS29, VPS35, CDKN1B, TGFB receptors, BACE1, BRMS1, PIP5K1C isoform 3. Interacts with DCTN1; the association with DCTN1 is involved in movement of retromer-c ontaining vesicles toward the TGN (PubMed:11279102, PubMed:17148574, PubMed:19619496, PubMed:19935774, PubMed:20354142, PubMed:20830743, PubMed:23085988, PubMed:24610942). Interacts with CDKN1B and GIT1 (By similarity). Interacts with PIM1; translocating SNX6 to the nucleus (PubMed:11591366).</text>
</comment>
<comment type="interaction">
    <interactant intactId="EBI-949294">
        <id>Q9UNH7</id>
    </interactant>
    <interactant intactId="EBI-77613">
        <id>P05067</id>
        <label>APP</label>
    </interactant>
    <organismsDiffer>false</organismsDiffer>
    <experiments>3</experiments>
</comment>
<comment type="interaction">
    <interactant intactId="EBI-949294">
        <id>Q9UNH7</id>
    </interactant>
    <interactant intactId="EBI-2433139">
        <id>P56817</id>
        <label>BACE1</label>
    </interactant>
    <organismsDiffer>false</organismsDiffer>
    <experiments>2</experiments>
</comment>
<comment type="interaction">
    <interactant intactId="EBI-949294">
        <id>Q9UNH7</id>
    </interactant>
    <interactant intactId="EBI-724352">
        <id>Q14203</id>
        <label>DCTN1</label>
    </interactant>
    <organismsDiffer>false</organismsDiffer>
    <experiments>2</experiments>
</comment>
<comment type="interaction">
    <interactant intactId="EBI-949294">
        <id>Q9UNH7</id>
    </interactant>
    <interactant intactId="EBI-2822329">
        <id>Q13596</id>
        <label>SNX1</label>
    </interactant>
    <organismsDiffer>false</organismsDiffer>
    <experiments>10</experiments>
</comment>
<comment type="interaction">
    <interactant intactId="EBI-949294">
        <id>Q9UNH7</id>
    </interactant>
    <interactant intactId="EBI-1046690">
        <id>O60749</id>
        <label>SNX2</label>
    </interactant>
    <organismsDiffer>false</organismsDiffer>
    <experiments>10</experiments>
</comment>
<comment type="interaction">
    <interactant intactId="EBI-949294">
        <id>Q9UNH7</id>
    </interactant>
    <interactant intactId="EBI-11523345">
        <id>Q8IYF3-3</id>
        <label>TEX11</label>
    </interactant>
    <organismsDiffer>false</organismsDiffer>
    <experiments>3</experiments>
</comment>
<comment type="interaction">
    <interactant intactId="EBI-949294">
        <id>Q9UNH7</id>
    </interactant>
    <interactant intactId="EBI-22303778">
        <id>P0DJI4</id>
        <label>incE</label>
    </interactant>
    <organismsDiffer>true</organismsDiffer>
    <experiments>8</experiments>
</comment>
<comment type="subcellular location">
    <subcellularLocation>
        <location evidence="5 7 9">Early endosome</location>
    </subcellularLocation>
    <subcellularLocation>
        <location evidence="9 14">Early endosome membrane</location>
        <topology evidence="5">Peripheral membrane protein</topology>
        <orientation evidence="19">Cytoplasmic side</orientation>
    </subcellularLocation>
    <subcellularLocation>
        <location evidence="10">Cytoplasmic vesicle</location>
    </subcellularLocation>
    <subcellularLocation>
        <location evidence="11">Cytoplasm</location>
    </subcellularLocation>
    <subcellularLocation>
        <location evidence="6 11">Nucleus</location>
    </subcellularLocation>
    <text evidence="9">Interaction with SNX1 or SNX2 promotes location at endosome membranes (PubMed:19935774). Only a minor proportion is seen in the nucleus.</text>
</comment>
<comment type="alternative products">
    <event type="alternative splicing"/>
    <isoform>
        <id>Q9UNH7-1</id>
        <name>1</name>
        <sequence type="displayed"/>
    </isoform>
    <isoform>
        <id>Q9UNH7-2</id>
        <name>2</name>
        <sequence type="described" ref="VSP_044824"/>
    </isoform>
</comment>
<comment type="domain">
    <text evidence="1">The PX domain mediates interaction with membranes enriched in phosphatidylinositol 3,4-bisphosphate and/or phosphatidylinositol 4,5-bisphosphate.</text>
</comment>
<comment type="domain">
    <text evidence="18">The BAR domain is able to sense membrane curvature upon dimerization. Membrane remodeling seems to implicate insertion of an amphipathic helix (AH) in the membrane (Probable).</text>
</comment>
<comment type="PTM">
    <text evidence="6">In vitro phosphorylated by PIM1; not affecting PIM1-dependent nuclear translocation (PubMed:11591366).</text>
</comment>
<comment type="similarity">
    <text evidence="19">Belongs to the sorting nexin family.</text>
</comment>
<comment type="sequence caution" evidence="19">
    <conflict type="erroneous initiation">
        <sequence resource="EMBL-CDS" id="AAD24202"/>
    </conflict>
</comment>
<organism>
    <name type="scientific">Homo sapiens</name>
    <name type="common">Human</name>
    <dbReference type="NCBI Taxonomy" id="9606"/>
    <lineage>
        <taxon>Eukaryota</taxon>
        <taxon>Metazoa</taxon>
        <taxon>Chordata</taxon>
        <taxon>Craniata</taxon>
        <taxon>Vertebrata</taxon>
        <taxon>Euteleostomi</taxon>
        <taxon>Mammalia</taxon>
        <taxon>Eutheria</taxon>
        <taxon>Euarchontoglires</taxon>
        <taxon>Primates</taxon>
        <taxon>Haplorrhini</taxon>
        <taxon>Catarrhini</taxon>
        <taxon>Hominidae</taxon>
        <taxon>Homo</taxon>
    </lineage>
</organism>
<reference key="1">
    <citation type="journal article" date="2001" name="Biochem. J.">
        <title>A large family of endosome-localized proteins related to sorting nexin 1.</title>
        <authorList>
            <person name="Teasdale R.D."/>
            <person name="Loci D."/>
            <person name="Houghton F."/>
            <person name="Karlsson L."/>
            <person name="Gleeson P.A."/>
        </authorList>
    </citation>
    <scope>NUCLEOTIDE SEQUENCE [MRNA] (ISOFORM 1)</scope>
    <scope>SUBCELLULAR LOCATION</scope>
</reference>
<reference key="2">
    <citation type="submission" date="1996-12" db="EMBL/GenBank/DDBJ databases">
        <authorList>
            <person name="Toji S."/>
            <person name="Yano M."/>
            <person name="Kobayasi A."/>
            <person name="Tamai K."/>
        </authorList>
    </citation>
    <scope>NUCLEOTIDE SEQUENCE [MRNA] (ISOFORM 1)</scope>
</reference>
<reference key="3">
    <citation type="journal article" date="2003" name="Nature">
        <title>The DNA sequence and analysis of human chromosome 14.</title>
        <authorList>
            <person name="Heilig R."/>
            <person name="Eckenberg R."/>
            <person name="Petit J.-L."/>
            <person name="Fonknechten N."/>
            <person name="Da Silva C."/>
            <person name="Cattolico L."/>
            <person name="Levy M."/>
            <person name="Barbe V."/>
            <person name="De Berardinis V."/>
            <person name="Ureta-Vidal A."/>
            <person name="Pelletier E."/>
            <person name="Vico V."/>
            <person name="Anthouard V."/>
            <person name="Rowen L."/>
            <person name="Madan A."/>
            <person name="Qin S."/>
            <person name="Sun H."/>
            <person name="Du H."/>
            <person name="Pepin K."/>
            <person name="Artiguenave F."/>
            <person name="Robert C."/>
            <person name="Cruaud C."/>
            <person name="Bruels T."/>
            <person name="Jaillon O."/>
            <person name="Friedlander L."/>
            <person name="Samson G."/>
            <person name="Brottier P."/>
            <person name="Cure S."/>
            <person name="Segurens B."/>
            <person name="Aniere F."/>
            <person name="Samain S."/>
            <person name="Crespeau H."/>
            <person name="Abbasi N."/>
            <person name="Aiach N."/>
            <person name="Boscus D."/>
            <person name="Dickhoff R."/>
            <person name="Dors M."/>
            <person name="Dubois I."/>
            <person name="Friedman C."/>
            <person name="Gouyvenoux M."/>
            <person name="James R."/>
            <person name="Madan A."/>
            <person name="Mairey-Estrada B."/>
            <person name="Mangenot S."/>
            <person name="Martins N."/>
            <person name="Menard M."/>
            <person name="Oztas S."/>
            <person name="Ratcliffe A."/>
            <person name="Shaffer T."/>
            <person name="Trask B."/>
            <person name="Vacherie B."/>
            <person name="Bellemere C."/>
            <person name="Belser C."/>
            <person name="Besnard-Gonnet M."/>
            <person name="Bartol-Mavel D."/>
            <person name="Boutard M."/>
            <person name="Briez-Silla S."/>
            <person name="Combette S."/>
            <person name="Dufosse-Laurent V."/>
            <person name="Ferron C."/>
            <person name="Lechaplais C."/>
            <person name="Louesse C."/>
            <person name="Muselet D."/>
            <person name="Magdelenat G."/>
            <person name="Pateau E."/>
            <person name="Petit E."/>
            <person name="Sirvain-Trukniewicz P."/>
            <person name="Trybou A."/>
            <person name="Vega-Czarny N."/>
            <person name="Bataille E."/>
            <person name="Bluet E."/>
            <person name="Bordelais I."/>
            <person name="Dubois M."/>
            <person name="Dumont C."/>
            <person name="Guerin T."/>
            <person name="Haffray S."/>
            <person name="Hammadi R."/>
            <person name="Muanga J."/>
            <person name="Pellouin V."/>
            <person name="Robert D."/>
            <person name="Wunderle E."/>
            <person name="Gauguet G."/>
            <person name="Roy A."/>
            <person name="Sainte-Marthe L."/>
            <person name="Verdier J."/>
            <person name="Verdier-Discala C."/>
            <person name="Hillier L.W."/>
            <person name="Fulton L."/>
            <person name="McPherson J."/>
            <person name="Matsuda F."/>
            <person name="Wilson R."/>
            <person name="Scarpelli C."/>
            <person name="Gyapay G."/>
            <person name="Wincker P."/>
            <person name="Saurin W."/>
            <person name="Quetier F."/>
            <person name="Waterston R."/>
            <person name="Hood L."/>
            <person name="Weissenbach J."/>
        </authorList>
    </citation>
    <scope>NUCLEOTIDE SEQUENCE [LARGE SCALE GENOMIC DNA]</scope>
</reference>
<reference key="4">
    <citation type="submission" date="2005-09" db="EMBL/GenBank/DDBJ databases">
        <authorList>
            <person name="Mural R.J."/>
            <person name="Istrail S."/>
            <person name="Sutton G."/>
            <person name="Florea L."/>
            <person name="Halpern A.L."/>
            <person name="Mobarry C.M."/>
            <person name="Lippert R."/>
            <person name="Walenz B."/>
            <person name="Shatkay H."/>
            <person name="Dew I."/>
            <person name="Miller J.R."/>
            <person name="Flanigan M.J."/>
            <person name="Edwards N.J."/>
            <person name="Bolanos R."/>
            <person name="Fasulo D."/>
            <person name="Halldorsson B.V."/>
            <person name="Hannenhalli S."/>
            <person name="Turner R."/>
            <person name="Yooseph S."/>
            <person name="Lu F."/>
            <person name="Nusskern D.R."/>
            <person name="Shue B.C."/>
            <person name="Zheng X.H."/>
            <person name="Zhong F."/>
            <person name="Delcher A.L."/>
            <person name="Huson D.H."/>
            <person name="Kravitz S.A."/>
            <person name="Mouchard L."/>
            <person name="Reinert K."/>
            <person name="Remington K.A."/>
            <person name="Clark A.G."/>
            <person name="Waterman M.S."/>
            <person name="Eichler E.E."/>
            <person name="Adams M.D."/>
            <person name="Hunkapiller M.W."/>
            <person name="Myers E.W."/>
            <person name="Venter J.C."/>
        </authorList>
    </citation>
    <scope>NUCLEOTIDE SEQUENCE [LARGE SCALE GENOMIC DNA]</scope>
</reference>
<reference key="5">
    <citation type="journal article" date="2004" name="Genome Res.">
        <title>The status, quality, and expansion of the NIH full-length cDNA project: the Mammalian Gene Collection (MGC).</title>
        <authorList>
            <consortium name="The MGC Project Team"/>
        </authorList>
    </citation>
    <scope>NUCLEOTIDE SEQUENCE [LARGE SCALE MRNA] (ISOFORM 2)</scope>
    <source>
        <tissue>Eye</tissue>
    </source>
</reference>
<reference key="6">
    <citation type="journal article" date="2001" name="FEBS Lett.">
        <title>Pim-1 translocates sorting nexin 6/TRAF4-associated factor 2 from cytoplasm to nucleus.</title>
        <authorList>
            <person name="Ishibashi Y."/>
            <person name="Maita H."/>
            <person name="Yano M."/>
            <person name="Koike N."/>
            <person name="Tamai K."/>
            <person name="Ariga H."/>
            <person name="Iguchi-Ariga S.M."/>
        </authorList>
    </citation>
    <scope>SUBCELLULAR LOCATION</scope>
    <scope>INTERACTION WITH PIM1</scope>
    <scope>PHOSPHORYLATION BY PIM1</scope>
</reference>
<reference key="7">
    <citation type="journal article" date="2001" name="J. Biol. Chem.">
        <title>Sorting nexin 6, a novel SNX, interacts with the transforming growth factor-beta family of receptor serine-threonine kinases.</title>
        <authorList>
            <person name="Parks W.T."/>
            <person name="Frank D.B."/>
            <person name="Huff C."/>
            <person name="Haft C.R."/>
            <person name="Martin J."/>
            <person name="Meng X."/>
            <person name="de Caestecker M.P."/>
            <person name="McNally J.G."/>
            <person name="Reddi A."/>
            <person name="Taylor S.I."/>
            <person name="Roberts A.B."/>
            <person name="Wang T."/>
            <person name="Lechleider R.J."/>
        </authorList>
    </citation>
    <scope>CHARACTERIZATION</scope>
    <scope>SUBUNIT</scope>
</reference>
<reference key="8">
    <citation type="journal article" date="2007" name="J. Cell Sci.">
        <title>A loss-of-function screen reveals SNX5 and SNX6 as potential components of the mammalian retromer.</title>
        <authorList>
            <person name="Wassmer T."/>
            <person name="Attar N."/>
            <person name="Bujny M.V."/>
            <person name="Oakley J."/>
            <person name="Traer C.J."/>
            <person name="Cullen P.J."/>
        </authorList>
    </citation>
    <scope>FUNCTION</scope>
    <scope>INTERACTION WITH SNX1</scope>
    <scope>SUBCELLULAR LOCATION</scope>
</reference>
<reference key="9">
    <citation type="journal article" date="2009" name="Anal. Chem.">
        <title>Lys-N and trypsin cover complementary parts of the phosphoproteome in a refined SCX-based approach.</title>
        <authorList>
            <person name="Gauci S."/>
            <person name="Helbig A.O."/>
            <person name="Slijper M."/>
            <person name="Krijgsveld J."/>
            <person name="Heck A.J."/>
            <person name="Mohammed S."/>
        </authorList>
    </citation>
    <scope>ACETYLATION [LARGE SCALE ANALYSIS] AT MET-1 AND MET-2</scope>
    <scope>CLEAVAGE OF INITIATOR METHIONINE [LARGE SCALE ANALYSIS]</scope>
    <scope>IDENTIFICATION BY MASS SPECTROMETRY [LARGE SCALE ANALYSIS]</scope>
</reference>
<reference key="10">
    <citation type="journal article" date="2009" name="Cell Res.">
        <title>The retromer component SNX6 interacts with dynactin p150(Glued) and mediates endosome-to-TGN transport.</title>
        <authorList>
            <person name="Hong Z."/>
            <person name="Yang Y."/>
            <person name="Zhang C."/>
            <person name="Niu Y."/>
            <person name="Li K."/>
            <person name="Zhao X."/>
            <person name="Liu J.J."/>
        </authorList>
    </citation>
    <scope>FUNCTION</scope>
    <scope>INTERACTION WITH DCTN1; SNX1 AND SNX2</scope>
    <scope>MUTAGENESIS OF ARG-68; GLN-69 AND ARG-97</scope>
    <scope>SUBCELLULAR LOCATION</scope>
</reference>
<reference key="11">
    <citation type="journal article" date="2009" name="Dev. Cell">
        <title>The retromer coat complex coordinates endosomal sorting and dynein-mediated transport, with carrier recognition by the trans-Golgi network.</title>
        <authorList>
            <person name="Wassmer T."/>
            <person name="Attar N."/>
            <person name="Harterink M."/>
            <person name="van Weering J.R."/>
            <person name="Traer C.J."/>
            <person name="Oakley J."/>
            <person name="Goud B."/>
            <person name="Stephens D.J."/>
            <person name="Verkade P."/>
            <person name="Korswagen H.C."/>
            <person name="Cullen P.J."/>
        </authorList>
    </citation>
    <scope>INTERACTION WITH SNX1; SNX2; VPS26A; VPS29; VPS35 AND DCTN1</scope>
</reference>
<reference key="12">
    <citation type="journal article" date="2010" name="FASEB J.">
        <title>Proteomic identification of sorting nexin 6 as a negative regulator of BACE1-mediated APP processing.</title>
        <authorList>
            <person name="Okada H."/>
            <person name="Zhang W."/>
            <person name="Peterhoff C."/>
            <person name="Hwang J.C."/>
            <person name="Nixon R.A."/>
            <person name="Ryu S.H."/>
            <person name="Kim T.W."/>
        </authorList>
    </citation>
    <scope>FUNCTION</scope>
    <scope>SUBCELLULAR LOCATION</scope>
    <scope>INTERACTION WITH BACE1</scope>
</reference>
<reference key="13">
    <citation type="journal article" date="2010" name="J. Cell. Biochem.">
        <title>Sorting nexin 6 interacts with breast cancer metastasis suppressor-1 and promotes transcriptional repression.</title>
        <authorList>
            <person name="Rivera J."/>
            <person name="Megias D."/>
            <person name="Bravo J."/>
        </authorList>
    </citation>
    <scope>FUNCTION</scope>
    <scope>SUBCELLULAR LOCATION</scope>
    <scope>INTERACTION WITH BRMS1</scope>
</reference>
<reference key="14">
    <citation type="journal article" date="2011" name="BMC Syst. Biol.">
        <title>Initial characterization of the human central proteome.</title>
        <authorList>
            <person name="Burkard T.R."/>
            <person name="Planyavsky M."/>
            <person name="Kaupe I."/>
            <person name="Breitwieser F.P."/>
            <person name="Buerckstuemmer T."/>
            <person name="Bennett K.L."/>
            <person name="Superti-Furga G."/>
            <person name="Colinge J."/>
        </authorList>
    </citation>
    <scope>IDENTIFICATION BY MASS SPECTROMETRY [LARGE SCALE ANALYSIS]</scope>
</reference>
<reference key="15">
    <citation type="journal article" date="2012" name="EMBO J.">
        <title>Molecular basis for SNX-BAR-mediated assembly of distinct endosomal sorting tubules.</title>
        <authorList>
            <person name="van Weering J.R."/>
            <person name="Sessions R.B."/>
            <person name="Traer C.J."/>
            <person name="Kloer D.P."/>
            <person name="Bhatia V.K."/>
            <person name="Stamou D."/>
            <person name="Carlsson S.R."/>
            <person name="Hurley J.H."/>
            <person name="Cullen P.J."/>
        </authorList>
    </citation>
    <scope>FUNCTION</scope>
    <scope>INTERACTION WITH SNX1 AND SNX2</scope>
    <scope>DOMAIN</scope>
</reference>
<reference key="16">
    <citation type="journal article" date="2012" name="Mol. Cell. Proteomics">
        <title>Comparative large-scale characterisation of plant vs. mammal proteins reveals similar and idiosyncratic N-alpha acetylation features.</title>
        <authorList>
            <person name="Bienvenut W.V."/>
            <person name="Sumpton D."/>
            <person name="Martinez A."/>
            <person name="Lilla S."/>
            <person name="Espagne C."/>
            <person name="Meinnel T."/>
            <person name="Giglione C."/>
        </authorList>
    </citation>
    <scope>ACETYLATION [LARGE SCALE ANALYSIS] AT MET-2</scope>
    <scope>CLEAVAGE OF INITIATOR METHIONINE [LARGE SCALE ANALYSIS]</scope>
    <scope>IDENTIFICATION BY MASS SPECTROMETRY [LARGE SCALE ANALYSIS]</scope>
</reference>
<reference key="17">
    <citation type="journal article" date="2012" name="Proc. Natl. Acad. Sci. U.S.A.">
        <title>N-terminal acetylome analyses and functional insights of the N-terminal acetyltransferase NatB.</title>
        <authorList>
            <person name="Van Damme P."/>
            <person name="Lasa M."/>
            <person name="Polevoda B."/>
            <person name="Gazquez C."/>
            <person name="Elosegui-Artola A."/>
            <person name="Kim D.S."/>
            <person name="De Juan-Pardo E."/>
            <person name="Demeyer K."/>
            <person name="Hole K."/>
            <person name="Larrea E."/>
            <person name="Timmerman E."/>
            <person name="Prieto J."/>
            <person name="Arnesen T."/>
            <person name="Sherman F."/>
            <person name="Gevaert K."/>
            <person name="Aldabe R."/>
        </authorList>
    </citation>
    <scope>ACETYLATION [LARGE SCALE ANALYSIS] AT MET-1 AND MET-2</scope>
    <scope>CLEAVAGE OF INITIATOR METHIONINE [LARGE SCALE ANALYSIS]</scope>
    <scope>IDENTIFICATION BY MASS SPECTROMETRY [LARGE SCALE ANALYSIS]</scope>
</reference>
<reference key="18">
    <citation type="journal article" date="2013" name="J. Proteome Res.">
        <title>Toward a comprehensive characterization of a human cancer cell phosphoproteome.</title>
        <authorList>
            <person name="Zhou H."/>
            <person name="Di Palma S."/>
            <person name="Preisinger C."/>
            <person name="Peng M."/>
            <person name="Polat A.N."/>
            <person name="Heck A.J."/>
            <person name="Mohammed S."/>
        </authorList>
    </citation>
    <scope>PHOSPHORYLATION [LARGE SCALE ANALYSIS] AT SER-116 AND SER-194</scope>
    <scope>IDENTIFICATION BY MASS SPECTROMETRY [LARGE SCALE ANALYSIS]</scope>
    <source>
        <tissue>Cervix carcinoma</tissue>
    </source>
</reference>
<reference key="19">
    <citation type="journal article" date="2014" name="J. Cell Sci.">
        <title>Isoform 5 of PIPKIgamma regulates the endosomal trafficking and degradation of E-cadherin.</title>
        <authorList>
            <person name="Schill N.J."/>
            <person name="Hedman A.C."/>
            <person name="Choi S."/>
            <person name="Anderson R.A."/>
        </authorList>
    </citation>
    <scope>FUNCTION</scope>
    <scope>INTERACTION WITH PIP5K1C</scope>
</reference>
<reference key="20">
    <citation type="journal article" date="2014" name="J. Proteomics">
        <title>An enzyme assisted RP-RPLC approach for in-depth analysis of human liver phosphoproteome.</title>
        <authorList>
            <person name="Bian Y."/>
            <person name="Song C."/>
            <person name="Cheng K."/>
            <person name="Dong M."/>
            <person name="Wang F."/>
            <person name="Huang J."/>
            <person name="Sun D."/>
            <person name="Wang L."/>
            <person name="Ye M."/>
            <person name="Zou H."/>
        </authorList>
    </citation>
    <scope>PHOSPHORYLATION [LARGE SCALE ANALYSIS] AT SER-194</scope>
    <scope>IDENTIFICATION BY MASS SPECTROMETRY [LARGE SCALE ANALYSIS]</scope>
    <source>
        <tissue>Liver</tissue>
    </source>
</reference>
<reference key="21">
    <citation type="journal article" date="2015" name="Proteomics">
        <title>N-terminome analysis of the human mitochondrial proteome.</title>
        <authorList>
            <person name="Vaca Jacome A.S."/>
            <person name="Rabilloud T."/>
            <person name="Schaeffer-Reiss C."/>
            <person name="Rompais M."/>
            <person name="Ayoub D."/>
            <person name="Lane L."/>
            <person name="Bairoch A."/>
            <person name="Van Dorsselaer A."/>
            <person name="Carapito C."/>
        </authorList>
    </citation>
    <scope>IDENTIFICATION BY MASS SPECTROMETRY [LARGE SCALE ANALYSIS]</scope>
</reference>
<dbReference type="EMBL" id="AF121856">
    <property type="protein sequence ID" value="AAD27829.1"/>
    <property type="molecule type" value="mRNA"/>
</dbReference>
<dbReference type="EMBL" id="U83194">
    <property type="protein sequence ID" value="AAD24202.1"/>
    <property type="status" value="ALT_INIT"/>
    <property type="molecule type" value="mRNA"/>
</dbReference>
<dbReference type="EMBL" id="AL445363">
    <property type="status" value="NOT_ANNOTATED_CDS"/>
    <property type="molecule type" value="Genomic_DNA"/>
</dbReference>
<dbReference type="EMBL" id="AL445883">
    <property type="status" value="NOT_ANNOTATED_CDS"/>
    <property type="molecule type" value="Genomic_DNA"/>
</dbReference>
<dbReference type="EMBL" id="CH471078">
    <property type="protein sequence ID" value="EAW65913.1"/>
    <property type="molecule type" value="Genomic_DNA"/>
</dbReference>
<dbReference type="EMBL" id="CH471078">
    <property type="protein sequence ID" value="EAW65915.1"/>
    <property type="molecule type" value="Genomic_DNA"/>
</dbReference>
<dbReference type="EMBL" id="BC001798">
    <property type="protein sequence ID" value="AAH01798.1"/>
    <property type="molecule type" value="mRNA"/>
</dbReference>
<dbReference type="CCDS" id="CCDS41942.2">
    <molecule id="Q9UNH7-1"/>
</dbReference>
<dbReference type="CCDS" id="CCDS9648.1">
    <molecule id="Q9UNH7-2"/>
</dbReference>
<dbReference type="RefSeq" id="NP_067072.3">
    <molecule id="Q9UNH7-2"/>
    <property type="nucleotide sequence ID" value="NM_021249.4"/>
</dbReference>
<dbReference type="RefSeq" id="NP_689419.3">
    <molecule id="Q9UNH7-1"/>
    <property type="nucleotide sequence ID" value="NM_152233.4"/>
</dbReference>
<dbReference type="SMR" id="Q9UNH7"/>
<dbReference type="BioGRID" id="121852">
    <property type="interactions" value="242"/>
</dbReference>
<dbReference type="ComplexPortal" id="CPX-8835">
    <property type="entry name" value="SNX1-SNX6 sorting nexin complex"/>
</dbReference>
<dbReference type="ComplexPortal" id="CPX-8839">
    <property type="entry name" value="SNX2-SNX6 sorting nexin complex"/>
</dbReference>
<dbReference type="CORUM" id="Q9UNH7"/>
<dbReference type="DIP" id="DIP-37549N"/>
<dbReference type="FunCoup" id="Q9UNH7">
    <property type="interactions" value="2605"/>
</dbReference>
<dbReference type="IntAct" id="Q9UNH7">
    <property type="interactions" value="94"/>
</dbReference>
<dbReference type="MINT" id="Q9UNH7"/>
<dbReference type="STRING" id="9606.ENSP00000498872"/>
<dbReference type="TCDB" id="3.A.34.1.1">
    <property type="family name" value="the sorting nexins of the escrt complexes (sn-escrt)"/>
</dbReference>
<dbReference type="GlyGen" id="Q9UNH7">
    <property type="glycosylation" value="1 site, 1 O-linked glycan (1 site)"/>
</dbReference>
<dbReference type="iPTMnet" id="Q9UNH7"/>
<dbReference type="MetOSite" id="Q9UNH7"/>
<dbReference type="PhosphoSitePlus" id="Q9UNH7"/>
<dbReference type="SwissPalm" id="Q9UNH7"/>
<dbReference type="BioMuta" id="SNX6"/>
<dbReference type="DMDM" id="10720285"/>
<dbReference type="OGP" id="Q9UNH7"/>
<dbReference type="REPRODUCTION-2DPAGE" id="IPI00298111"/>
<dbReference type="jPOST" id="Q9UNH7"/>
<dbReference type="MassIVE" id="Q9UNH7"/>
<dbReference type="PaxDb" id="9606-ENSP00000355217"/>
<dbReference type="PeptideAtlas" id="Q9UNH7"/>
<dbReference type="ProteomicsDB" id="7568"/>
<dbReference type="ProteomicsDB" id="85296">
    <molecule id="Q9UNH7-1"/>
</dbReference>
<dbReference type="Pumba" id="Q9UNH7"/>
<dbReference type="Antibodypedia" id="23146">
    <property type="antibodies" value="303 antibodies from 27 providers"/>
</dbReference>
<dbReference type="DNASU" id="58533"/>
<dbReference type="Ensembl" id="ENST00000362031.10">
    <molecule id="Q9UNH7-1"/>
    <property type="protein sequence ID" value="ENSP00000355217.5"/>
    <property type="gene ID" value="ENSG00000129515.20"/>
</dbReference>
<dbReference type="Ensembl" id="ENST00000396526.7">
    <molecule id="Q9UNH7-2"/>
    <property type="protein sequence ID" value="ENSP00000379779.3"/>
    <property type="gene ID" value="ENSG00000129515.20"/>
</dbReference>
<dbReference type="GeneID" id="58533"/>
<dbReference type="KEGG" id="hsa:58533"/>
<dbReference type="MANE-Select" id="ENST00000362031.10">
    <property type="protein sequence ID" value="ENSP00000355217.5"/>
    <property type="RefSeq nucleotide sequence ID" value="NM_152233.4"/>
    <property type="RefSeq protein sequence ID" value="NP_689419.3"/>
</dbReference>
<dbReference type="UCSC" id="uc001wse.2">
    <molecule id="Q9UNH7-1"/>
    <property type="organism name" value="human"/>
</dbReference>
<dbReference type="AGR" id="HGNC:14970"/>
<dbReference type="CTD" id="58533"/>
<dbReference type="DisGeNET" id="58533"/>
<dbReference type="GeneCards" id="SNX6"/>
<dbReference type="HGNC" id="HGNC:14970">
    <property type="gene designation" value="SNX6"/>
</dbReference>
<dbReference type="HPA" id="ENSG00000129515">
    <property type="expression patterns" value="Low tissue specificity"/>
</dbReference>
<dbReference type="MIM" id="606098">
    <property type="type" value="gene"/>
</dbReference>
<dbReference type="neXtProt" id="NX_Q9UNH7"/>
<dbReference type="OpenTargets" id="ENSG00000129515"/>
<dbReference type="PharmGKB" id="PA37946"/>
<dbReference type="VEuPathDB" id="HostDB:ENSG00000129515"/>
<dbReference type="eggNOG" id="KOG1660">
    <property type="taxonomic scope" value="Eukaryota"/>
</dbReference>
<dbReference type="GeneTree" id="ENSGT00940000154940"/>
<dbReference type="InParanoid" id="Q9UNH7"/>
<dbReference type="OrthoDB" id="9976382at2759"/>
<dbReference type="PAN-GO" id="Q9UNH7">
    <property type="GO annotations" value="3 GO annotations based on evolutionary models"/>
</dbReference>
<dbReference type="PhylomeDB" id="Q9UNH7"/>
<dbReference type="TreeFam" id="TF313698"/>
<dbReference type="PathwayCommons" id="Q9UNH7"/>
<dbReference type="SignaLink" id="Q9UNH7"/>
<dbReference type="SIGNOR" id="Q9UNH7"/>
<dbReference type="BioGRID-ORCS" id="58533">
    <property type="hits" value="52 hits in 1158 CRISPR screens"/>
</dbReference>
<dbReference type="CD-CODE" id="FB4E32DD">
    <property type="entry name" value="Presynaptic clusters and postsynaptic densities"/>
</dbReference>
<dbReference type="ChiTaRS" id="SNX6">
    <property type="organism name" value="human"/>
</dbReference>
<dbReference type="GenomeRNAi" id="58533"/>
<dbReference type="Pharos" id="Q9UNH7">
    <property type="development level" value="Tbio"/>
</dbReference>
<dbReference type="PRO" id="PR:Q9UNH7"/>
<dbReference type="Proteomes" id="UP000005640">
    <property type="component" value="Chromosome 14"/>
</dbReference>
<dbReference type="RNAct" id="Q9UNH7">
    <property type="molecule type" value="protein"/>
</dbReference>
<dbReference type="Bgee" id="ENSG00000129515">
    <property type="expression patterns" value="Expressed in left ventricle myocardium and 189 other cell types or tissues"/>
</dbReference>
<dbReference type="ExpressionAtlas" id="Q9UNH7">
    <property type="expression patterns" value="baseline and differential"/>
</dbReference>
<dbReference type="GO" id="GO:0005737">
    <property type="term" value="C:cytoplasm"/>
    <property type="evidence" value="ECO:0000314"/>
    <property type="project" value="UniProtKB"/>
</dbReference>
<dbReference type="GO" id="GO:0005829">
    <property type="term" value="C:cytosol"/>
    <property type="evidence" value="ECO:0007669"/>
    <property type="project" value="GOC"/>
</dbReference>
<dbReference type="GO" id="GO:0031901">
    <property type="term" value="C:early endosome membrane"/>
    <property type="evidence" value="ECO:0000314"/>
    <property type="project" value="UniProtKB"/>
</dbReference>
<dbReference type="GO" id="GO:0005768">
    <property type="term" value="C:endosome"/>
    <property type="evidence" value="ECO:0000314"/>
    <property type="project" value="HPA"/>
</dbReference>
<dbReference type="GO" id="GO:0098978">
    <property type="term" value="C:glutamatergic synapse"/>
    <property type="evidence" value="ECO:0007669"/>
    <property type="project" value="Ensembl"/>
</dbReference>
<dbReference type="GO" id="GO:0005764">
    <property type="term" value="C:lysosome"/>
    <property type="evidence" value="ECO:0000314"/>
    <property type="project" value="HPA"/>
</dbReference>
<dbReference type="GO" id="GO:0005634">
    <property type="term" value="C:nucleus"/>
    <property type="evidence" value="ECO:0007669"/>
    <property type="project" value="UniProtKB-SubCell"/>
</dbReference>
<dbReference type="GO" id="GO:0098842">
    <property type="term" value="C:postsynaptic early endosome"/>
    <property type="evidence" value="ECO:0007669"/>
    <property type="project" value="Ensembl"/>
</dbReference>
<dbReference type="GO" id="GO:0030904">
    <property type="term" value="C:retromer complex"/>
    <property type="evidence" value="ECO:0000314"/>
    <property type="project" value="UniProtKB"/>
</dbReference>
<dbReference type="GO" id="GO:0030905">
    <property type="term" value="C:retromer, tubulation complex"/>
    <property type="evidence" value="ECO:0000303"/>
    <property type="project" value="ParkinsonsUK-UCL"/>
</dbReference>
<dbReference type="GO" id="GO:0097422">
    <property type="term" value="C:tubular endosome"/>
    <property type="evidence" value="ECO:0000314"/>
    <property type="project" value="UniProtKB"/>
</dbReference>
<dbReference type="GO" id="GO:0034452">
    <property type="term" value="F:dynactin binding"/>
    <property type="evidence" value="ECO:0000314"/>
    <property type="project" value="UniProtKB"/>
</dbReference>
<dbReference type="GO" id="GO:0035091">
    <property type="term" value="F:phosphatidylinositol binding"/>
    <property type="evidence" value="ECO:0007669"/>
    <property type="project" value="InterPro"/>
</dbReference>
<dbReference type="GO" id="GO:0042803">
    <property type="term" value="F:protein homodimerization activity"/>
    <property type="evidence" value="ECO:0000353"/>
    <property type="project" value="HGNC-UCL"/>
</dbReference>
<dbReference type="GO" id="GO:0034713">
    <property type="term" value="F:type I transforming growth factor beta receptor binding"/>
    <property type="evidence" value="ECO:0007669"/>
    <property type="project" value="Ensembl"/>
</dbReference>
<dbReference type="GO" id="GO:1904646">
    <property type="term" value="P:cellular response to amyloid-beta"/>
    <property type="evidence" value="ECO:0000316"/>
    <property type="project" value="ARUK-UCL"/>
</dbReference>
<dbReference type="GO" id="GO:0071364">
    <property type="term" value="P:cellular response to epidermal growth factor stimulus"/>
    <property type="evidence" value="ECO:0007669"/>
    <property type="project" value="Ensembl"/>
</dbReference>
<dbReference type="GO" id="GO:0006886">
    <property type="term" value="P:intracellular protein transport"/>
    <property type="evidence" value="ECO:0000315"/>
    <property type="project" value="UniProtKB"/>
</dbReference>
<dbReference type="GO" id="GO:0045892">
    <property type="term" value="P:negative regulation of DNA-templated transcription"/>
    <property type="evidence" value="ECO:0000314"/>
    <property type="project" value="UniProtKB"/>
</dbReference>
<dbReference type="GO" id="GO:0007175">
    <property type="term" value="P:negative regulation of epidermal growth factor-activated receptor activity"/>
    <property type="evidence" value="ECO:0000303"/>
    <property type="project" value="UniProtKB"/>
</dbReference>
<dbReference type="GO" id="GO:0043524">
    <property type="term" value="P:negative regulation of neuron apoptotic process"/>
    <property type="evidence" value="ECO:0000316"/>
    <property type="project" value="ARUK-UCL"/>
</dbReference>
<dbReference type="GO" id="GO:0030512">
    <property type="term" value="P:negative regulation of transforming growth factor beta receptor signaling pathway"/>
    <property type="evidence" value="ECO:0000314"/>
    <property type="project" value="HGNC-UCL"/>
</dbReference>
<dbReference type="GO" id="GO:0016241">
    <property type="term" value="P:regulation of macroautophagy"/>
    <property type="evidence" value="ECO:0000303"/>
    <property type="project" value="ParkinsonsUK-UCL"/>
</dbReference>
<dbReference type="GO" id="GO:0099072">
    <property type="term" value="P:regulation of postsynaptic membrane neurotransmitter receptor levels"/>
    <property type="evidence" value="ECO:0007669"/>
    <property type="project" value="Ensembl"/>
</dbReference>
<dbReference type="GO" id="GO:0042147">
    <property type="term" value="P:retrograde transport, endosome to Golgi"/>
    <property type="evidence" value="ECO:0000315"/>
    <property type="project" value="UniProtKB"/>
</dbReference>
<dbReference type="CDD" id="cd07662">
    <property type="entry name" value="BAR_SNX6"/>
    <property type="match status" value="1"/>
</dbReference>
<dbReference type="CDD" id="cd07292">
    <property type="entry name" value="PX_SNX6"/>
    <property type="match status" value="1"/>
</dbReference>
<dbReference type="FunFam" id="1.20.1270.60:FF:000008">
    <property type="entry name" value="Sorting nexin"/>
    <property type="match status" value="1"/>
</dbReference>
<dbReference type="FunFam" id="3.30.1520.10:FF:000001">
    <property type="entry name" value="Sorting nexin"/>
    <property type="match status" value="1"/>
</dbReference>
<dbReference type="Gene3D" id="1.20.1270.60">
    <property type="entry name" value="Arfaptin homology (AH) domain/BAR domain"/>
    <property type="match status" value="1"/>
</dbReference>
<dbReference type="Gene3D" id="3.30.1520.10">
    <property type="entry name" value="Phox-like domain"/>
    <property type="match status" value="1"/>
</dbReference>
<dbReference type="InterPro" id="IPR027267">
    <property type="entry name" value="AH/BAR_dom_sf"/>
</dbReference>
<dbReference type="InterPro" id="IPR028657">
    <property type="entry name" value="BAR_SNX6"/>
</dbReference>
<dbReference type="InterPro" id="IPR001683">
    <property type="entry name" value="PX_dom"/>
</dbReference>
<dbReference type="InterPro" id="IPR036871">
    <property type="entry name" value="PX_dom_sf"/>
</dbReference>
<dbReference type="InterPro" id="IPR042136">
    <property type="entry name" value="PX_SNX6"/>
</dbReference>
<dbReference type="InterPro" id="IPR014637">
    <property type="entry name" value="SNX5/SNX6/SNX32"/>
</dbReference>
<dbReference type="InterPro" id="IPR015404">
    <property type="entry name" value="Vps5_C"/>
</dbReference>
<dbReference type="PANTHER" id="PTHR45850">
    <property type="entry name" value="SORTING NEXIN FAMILY MEMBER"/>
    <property type="match status" value="1"/>
</dbReference>
<dbReference type="PANTHER" id="PTHR45850:SF4">
    <property type="entry name" value="SORTING NEXIN-6"/>
    <property type="match status" value="1"/>
</dbReference>
<dbReference type="Pfam" id="PF00787">
    <property type="entry name" value="PX"/>
    <property type="match status" value="1"/>
</dbReference>
<dbReference type="Pfam" id="PF09325">
    <property type="entry name" value="Vps5"/>
    <property type="match status" value="1"/>
</dbReference>
<dbReference type="PIRSF" id="PIRSF036924">
    <property type="entry name" value="Snx5_Snx6"/>
    <property type="match status" value="1"/>
</dbReference>
<dbReference type="SUPFAM" id="SSF103657">
    <property type="entry name" value="BAR/IMD domain-like"/>
    <property type="match status" value="1"/>
</dbReference>
<dbReference type="SUPFAM" id="SSF64268">
    <property type="entry name" value="PX domain"/>
    <property type="match status" value="1"/>
</dbReference>
<dbReference type="PROSITE" id="PS50195">
    <property type="entry name" value="PX"/>
    <property type="match status" value="1"/>
</dbReference>
<protein>
    <recommendedName>
        <fullName>Sorting nexin-6</fullName>
    </recommendedName>
    <alternativeName>
        <fullName>TRAF4-associated factor 2</fullName>
    </alternativeName>
    <component>
        <recommendedName>
            <fullName>Sorting nexin-6, N-terminally processed</fullName>
        </recommendedName>
    </component>
</protein>
<name>SNX6_HUMAN</name>
<keyword id="KW-0007">Acetylation</keyword>
<keyword id="KW-0025">Alternative splicing</keyword>
<keyword id="KW-0963">Cytoplasm</keyword>
<keyword id="KW-0968">Cytoplasmic vesicle</keyword>
<keyword id="KW-0967">Endosome</keyword>
<keyword id="KW-0446">Lipid-binding</keyword>
<keyword id="KW-0472">Membrane</keyword>
<keyword id="KW-0539">Nucleus</keyword>
<keyword id="KW-0597">Phosphoprotein</keyword>
<keyword id="KW-0653">Protein transport</keyword>
<keyword id="KW-1267">Proteomics identification</keyword>
<keyword id="KW-1185">Reference proteome</keyword>
<keyword id="KW-0813">Transport</keyword>
<gene>
    <name type="primary">SNX6</name>
</gene>
<proteinExistence type="evidence at protein level"/>
<accession>Q9UNH7</accession>
<accession>C0H5W9</accession>
<accession>Q9Y449</accession>
<evidence type="ECO:0000250" key="1">
    <source>
        <dbReference type="UniProtKB" id="B1H267"/>
    </source>
</evidence>
<evidence type="ECO:0000250" key="2">
    <source>
        <dbReference type="UniProtKB" id="Q6P8X1"/>
    </source>
</evidence>
<evidence type="ECO:0000255" key="3">
    <source>
        <dbReference type="PROSITE-ProRule" id="PRU00147"/>
    </source>
</evidence>
<evidence type="ECO:0000269" key="4">
    <source>
    </source>
</evidence>
<evidence type="ECO:0000269" key="5">
    <source>
    </source>
</evidence>
<evidence type="ECO:0000269" key="6">
    <source>
    </source>
</evidence>
<evidence type="ECO:0000269" key="7">
    <source>
    </source>
</evidence>
<evidence type="ECO:0000269" key="8">
    <source>
    </source>
</evidence>
<evidence type="ECO:0000269" key="9">
    <source>
    </source>
</evidence>
<evidence type="ECO:0000269" key="10">
    <source>
    </source>
</evidence>
<evidence type="ECO:0000269" key="11">
    <source>
    </source>
</evidence>
<evidence type="ECO:0000269" key="12">
    <source>
    </source>
</evidence>
<evidence type="ECO:0000269" key="13">
    <source>
    </source>
</evidence>
<evidence type="ECO:0000303" key="14">
    <source>
    </source>
</evidence>
<evidence type="ECO:0000303" key="15">
    <source>
    </source>
</evidence>
<evidence type="ECO:0000303" key="16">
    <source>
    </source>
</evidence>
<evidence type="ECO:0000303" key="17">
    <source>
    </source>
</evidence>
<evidence type="ECO:0000303" key="18">
    <source>
    </source>
</evidence>
<evidence type="ECO:0000305" key="19"/>
<evidence type="ECO:0007744" key="20">
    <source>
    </source>
</evidence>
<evidence type="ECO:0007744" key="21">
    <source>
    </source>
</evidence>
<evidence type="ECO:0007744" key="22">
    <source>
    </source>
</evidence>
<evidence type="ECO:0007744" key="23">
    <source>
    </source>
</evidence>
<evidence type="ECO:0007744" key="24">
    <source>
    </source>
</evidence>
<sequence>MMEGLDDGPDFLSEEDRGLKAINVDLQSDAALQVDISDALSERDKVKFTVHTKSSLPNFKQNEFSVVRQHEEFIWLHDSFVENEDYAGYIIPPAPPRPDFDASREKLQKLGEGEGSMTKEEFTKMKQELEAEYLAIFKKTVAMHEVFLCRVAAHPILRRDLNFHVFLEYNQDLSVRGKNKKEKLEDFFKNMVKSADGVIVSGVKDVDDFFEHERTFLLEYHNRVKDASAKSDRMTRSHKSAADDYNRIGSSLYALGTQDSTDICKFFLKVSELFDKTRKIEARVSADEDLKLSDLLKYYLRESQAAKDLLYRRSRSLVDYENANKALDKARAKNKDVLQAETSQQLCCQKFEKISESAKQELIDFKTRRVAAFRKNLVELAELELKHAKGNLQLLQNCLAVLNGDT</sequence>
<feature type="chain" id="PRO_0000423277" description="Sorting nexin-6">
    <location>
        <begin position="1"/>
        <end position="406"/>
    </location>
</feature>
<feature type="initiator methionine" description="Removed; alternate" evidence="20 21 22">
    <location>
        <position position="1"/>
    </location>
</feature>
<feature type="chain" id="PRO_0000213846" description="Sorting nexin-6, N-terminally processed">
    <location>
        <begin position="2"/>
        <end position="406"/>
    </location>
</feature>
<feature type="domain" description="PX" evidence="3">
    <location>
        <begin position="26"/>
        <end position="173"/>
    </location>
</feature>
<feature type="domain" description="BAR" evidence="19">
    <location>
        <begin position="203"/>
        <end position="406"/>
    </location>
</feature>
<feature type="region of interest" description="Interaction with PIM1" evidence="6">
    <location>
        <begin position="2"/>
        <end position="179"/>
    </location>
</feature>
<feature type="region of interest" description="Membrane-binding amphipathic helix" evidence="18">
    <location>
        <begin position="182"/>
        <end position="199"/>
    </location>
</feature>
<feature type="binding site" evidence="1">
    <location>
        <begin position="41"/>
        <end position="47"/>
    </location>
    <ligand>
        <name>a 1,2-diacyl-sn-glycero-3-phospho-(1D-myo-inositol-4,5-bisphosphate)</name>
        <dbReference type="ChEBI" id="CHEBI:58456"/>
    </ligand>
</feature>
<feature type="binding site" evidence="1">
    <location>
        <begin position="100"/>
        <end position="106"/>
    </location>
    <ligand>
        <name>a 1,2-diacyl-sn-glycero-3-phospho-(1D-myo-inositol-4,5-bisphosphate)</name>
        <dbReference type="ChEBI" id="CHEBI:58456"/>
    </ligand>
</feature>
<feature type="binding site" evidence="1">
    <location>
        <begin position="114"/>
        <end position="117"/>
    </location>
    <ligand>
        <name>a 1,2-diacyl-sn-glycero-3-phospho-(1D-myo-inositol-4,5-bisphosphate)</name>
        <dbReference type="ChEBI" id="CHEBI:58456"/>
    </ligand>
</feature>
<feature type="modified residue" description="N-acetylmethionine" evidence="20 22">
    <location>
        <position position="1"/>
    </location>
</feature>
<feature type="modified residue" description="N-acetylmethionine; in Sorting nexin-6, N-terminally processed" evidence="20 21 22">
    <location>
        <position position="2"/>
    </location>
</feature>
<feature type="modified residue" description="Phosphoserine" evidence="23">
    <location>
        <position position="116"/>
    </location>
</feature>
<feature type="modified residue" description="Phosphoserine" evidence="23 24">
    <location>
        <position position="194"/>
    </location>
</feature>
<feature type="splice variant" id="VSP_044824" description="In isoform 2." evidence="15">
    <location>
        <begin position="1"/>
        <end position="116"/>
    </location>
</feature>
<feature type="mutagenesis site" description="Reduces interaction with SNX1. Abolishes location at endosome membranes." evidence="9">
    <original>R</original>
    <variation>A</variation>
    <location>
        <position position="68"/>
    </location>
</feature>
<feature type="mutagenesis site" description="No effect on subcellular location." evidence="9">
    <original>Q</original>
    <variation>A</variation>
    <location>
        <position position="69"/>
    </location>
</feature>
<feature type="mutagenesis site" description="No effect on subcellular location." evidence="9">
    <original>R</original>
    <variation>A</variation>
    <location>
        <position position="97"/>
    </location>
</feature>